<keyword id="KW-1185">Reference proteome</keyword>
<keyword id="KW-0687">Ribonucleoprotein</keyword>
<keyword id="KW-0689">Ribosomal protein</keyword>
<organism>
    <name type="scientific">Saccharophagus degradans (strain 2-40 / ATCC 43961 / DSM 17024)</name>
    <dbReference type="NCBI Taxonomy" id="203122"/>
    <lineage>
        <taxon>Bacteria</taxon>
        <taxon>Pseudomonadati</taxon>
        <taxon>Pseudomonadota</taxon>
        <taxon>Gammaproteobacteria</taxon>
        <taxon>Cellvibrionales</taxon>
        <taxon>Cellvibrionaceae</taxon>
        <taxon>Saccharophagus</taxon>
    </lineage>
</organism>
<sequence>MVSIRLSRGGSKKRPFYHLTVTDSRKSRDGRFIERVGFFNPVARGQEERLRVESERLNYWLSQGAQCSERVAKLIKDAAAAA</sequence>
<feature type="chain" id="PRO_0000243865" description="Small ribosomal subunit protein bS16">
    <location>
        <begin position="1"/>
        <end position="82"/>
    </location>
</feature>
<gene>
    <name evidence="1" type="primary">rpsP</name>
    <name type="ordered locus">Sde_1203</name>
</gene>
<evidence type="ECO:0000255" key="1">
    <source>
        <dbReference type="HAMAP-Rule" id="MF_00385"/>
    </source>
</evidence>
<evidence type="ECO:0000305" key="2"/>
<accession>Q21LG4</accession>
<protein>
    <recommendedName>
        <fullName evidence="1">Small ribosomal subunit protein bS16</fullName>
    </recommendedName>
    <alternativeName>
        <fullName evidence="2">30S ribosomal protein S16</fullName>
    </alternativeName>
</protein>
<reference key="1">
    <citation type="journal article" date="2008" name="PLoS Genet.">
        <title>Complete genome sequence of the complex carbohydrate-degrading marine bacterium, Saccharophagus degradans strain 2-40 T.</title>
        <authorList>
            <person name="Weiner R.M."/>
            <person name="Taylor L.E. II"/>
            <person name="Henrissat B."/>
            <person name="Hauser L."/>
            <person name="Land M."/>
            <person name="Coutinho P.M."/>
            <person name="Rancurel C."/>
            <person name="Saunders E.H."/>
            <person name="Longmire A.G."/>
            <person name="Zhang H."/>
            <person name="Bayer E.A."/>
            <person name="Gilbert H.J."/>
            <person name="Larimer F."/>
            <person name="Zhulin I.B."/>
            <person name="Ekborg N.A."/>
            <person name="Lamed R."/>
            <person name="Richardson P.M."/>
            <person name="Borovok I."/>
            <person name="Hutcheson S."/>
        </authorList>
    </citation>
    <scope>NUCLEOTIDE SEQUENCE [LARGE SCALE GENOMIC DNA]</scope>
    <source>
        <strain>2-40 / ATCC 43961 / DSM 17024</strain>
    </source>
</reference>
<dbReference type="EMBL" id="CP000282">
    <property type="protein sequence ID" value="ABD80465.1"/>
    <property type="molecule type" value="Genomic_DNA"/>
</dbReference>
<dbReference type="RefSeq" id="WP_011467685.1">
    <property type="nucleotide sequence ID" value="NC_007912.1"/>
</dbReference>
<dbReference type="SMR" id="Q21LG4"/>
<dbReference type="STRING" id="203122.Sde_1203"/>
<dbReference type="GeneID" id="98612881"/>
<dbReference type="KEGG" id="sde:Sde_1203"/>
<dbReference type="eggNOG" id="COG0228">
    <property type="taxonomic scope" value="Bacteria"/>
</dbReference>
<dbReference type="HOGENOM" id="CLU_100590_5_1_6"/>
<dbReference type="OrthoDB" id="9807878at2"/>
<dbReference type="Proteomes" id="UP000001947">
    <property type="component" value="Chromosome"/>
</dbReference>
<dbReference type="GO" id="GO:0005737">
    <property type="term" value="C:cytoplasm"/>
    <property type="evidence" value="ECO:0007669"/>
    <property type="project" value="UniProtKB-ARBA"/>
</dbReference>
<dbReference type="GO" id="GO:0015935">
    <property type="term" value="C:small ribosomal subunit"/>
    <property type="evidence" value="ECO:0007669"/>
    <property type="project" value="TreeGrafter"/>
</dbReference>
<dbReference type="GO" id="GO:0003735">
    <property type="term" value="F:structural constituent of ribosome"/>
    <property type="evidence" value="ECO:0007669"/>
    <property type="project" value="InterPro"/>
</dbReference>
<dbReference type="GO" id="GO:0006412">
    <property type="term" value="P:translation"/>
    <property type="evidence" value="ECO:0007669"/>
    <property type="project" value="UniProtKB-UniRule"/>
</dbReference>
<dbReference type="FunFam" id="3.30.1320.10:FF:000001">
    <property type="entry name" value="30S ribosomal protein S16"/>
    <property type="match status" value="1"/>
</dbReference>
<dbReference type="Gene3D" id="3.30.1320.10">
    <property type="match status" value="1"/>
</dbReference>
<dbReference type="HAMAP" id="MF_00385">
    <property type="entry name" value="Ribosomal_bS16"/>
    <property type="match status" value="1"/>
</dbReference>
<dbReference type="InterPro" id="IPR000307">
    <property type="entry name" value="Ribosomal_bS16"/>
</dbReference>
<dbReference type="InterPro" id="IPR023803">
    <property type="entry name" value="Ribosomal_bS16_dom_sf"/>
</dbReference>
<dbReference type="NCBIfam" id="TIGR00002">
    <property type="entry name" value="S16"/>
    <property type="match status" value="1"/>
</dbReference>
<dbReference type="PANTHER" id="PTHR12919">
    <property type="entry name" value="30S RIBOSOMAL PROTEIN S16"/>
    <property type="match status" value="1"/>
</dbReference>
<dbReference type="PANTHER" id="PTHR12919:SF20">
    <property type="entry name" value="SMALL RIBOSOMAL SUBUNIT PROTEIN BS16M"/>
    <property type="match status" value="1"/>
</dbReference>
<dbReference type="Pfam" id="PF00886">
    <property type="entry name" value="Ribosomal_S16"/>
    <property type="match status" value="1"/>
</dbReference>
<dbReference type="SUPFAM" id="SSF54565">
    <property type="entry name" value="Ribosomal protein S16"/>
    <property type="match status" value="1"/>
</dbReference>
<comment type="similarity">
    <text evidence="1">Belongs to the bacterial ribosomal protein bS16 family.</text>
</comment>
<name>RS16_SACD2</name>
<proteinExistence type="inferred from homology"/>